<dbReference type="EMBL" id="CP000932">
    <property type="protein sequence ID" value="ACM64351.1"/>
    <property type="molecule type" value="Genomic_DNA"/>
</dbReference>
<dbReference type="RefSeq" id="WP_012661734.1">
    <property type="nucleotide sequence ID" value="NC_012039.1"/>
</dbReference>
<dbReference type="SMR" id="B9KCR2"/>
<dbReference type="STRING" id="306263.Cla_1029"/>
<dbReference type="GeneID" id="93005067"/>
<dbReference type="KEGG" id="cla:CLA_1029"/>
<dbReference type="eggNOG" id="COG0227">
    <property type="taxonomic scope" value="Bacteria"/>
</dbReference>
<dbReference type="HOGENOM" id="CLU_064548_7_2_7"/>
<dbReference type="Proteomes" id="UP000007727">
    <property type="component" value="Chromosome"/>
</dbReference>
<dbReference type="GO" id="GO:1990904">
    <property type="term" value="C:ribonucleoprotein complex"/>
    <property type="evidence" value="ECO:0007669"/>
    <property type="project" value="UniProtKB-KW"/>
</dbReference>
<dbReference type="GO" id="GO:0005840">
    <property type="term" value="C:ribosome"/>
    <property type="evidence" value="ECO:0007669"/>
    <property type="project" value="UniProtKB-KW"/>
</dbReference>
<dbReference type="GO" id="GO:0003735">
    <property type="term" value="F:structural constituent of ribosome"/>
    <property type="evidence" value="ECO:0007669"/>
    <property type="project" value="InterPro"/>
</dbReference>
<dbReference type="GO" id="GO:0006412">
    <property type="term" value="P:translation"/>
    <property type="evidence" value="ECO:0007669"/>
    <property type="project" value="UniProtKB-UniRule"/>
</dbReference>
<dbReference type="Gene3D" id="2.20.150.30">
    <property type="match status" value="1"/>
</dbReference>
<dbReference type="Gene3D" id="2.30.170.40">
    <property type="entry name" value="Ribosomal protein L28/L24"/>
    <property type="match status" value="1"/>
</dbReference>
<dbReference type="HAMAP" id="MF_00373">
    <property type="entry name" value="Ribosomal_bL28"/>
    <property type="match status" value="1"/>
</dbReference>
<dbReference type="InterPro" id="IPR050096">
    <property type="entry name" value="Bacterial_rp_bL28"/>
</dbReference>
<dbReference type="InterPro" id="IPR026569">
    <property type="entry name" value="Ribosomal_bL28"/>
</dbReference>
<dbReference type="InterPro" id="IPR034704">
    <property type="entry name" value="Ribosomal_bL28/bL31-like_sf"/>
</dbReference>
<dbReference type="InterPro" id="IPR001383">
    <property type="entry name" value="Ribosomal_bL28_bact-type"/>
</dbReference>
<dbReference type="InterPro" id="IPR037147">
    <property type="entry name" value="Ribosomal_bL28_sf"/>
</dbReference>
<dbReference type="NCBIfam" id="TIGR00009">
    <property type="entry name" value="L28"/>
    <property type="match status" value="1"/>
</dbReference>
<dbReference type="PANTHER" id="PTHR39080">
    <property type="entry name" value="50S RIBOSOMAL PROTEIN L28"/>
    <property type="match status" value="1"/>
</dbReference>
<dbReference type="PANTHER" id="PTHR39080:SF1">
    <property type="entry name" value="LARGE RIBOSOMAL SUBUNIT PROTEIN BL28A"/>
    <property type="match status" value="1"/>
</dbReference>
<dbReference type="Pfam" id="PF00830">
    <property type="entry name" value="Ribosomal_L28"/>
    <property type="match status" value="1"/>
</dbReference>
<dbReference type="SUPFAM" id="SSF143800">
    <property type="entry name" value="L28p-like"/>
    <property type="match status" value="1"/>
</dbReference>
<protein>
    <recommendedName>
        <fullName evidence="1">Large ribosomal subunit protein bL28</fullName>
    </recommendedName>
    <alternativeName>
        <fullName evidence="2">50S ribosomal protein L28</fullName>
    </alternativeName>
</protein>
<comment type="similarity">
    <text evidence="1">Belongs to the bacterial ribosomal protein bL28 family.</text>
</comment>
<proteinExistence type="inferred from homology"/>
<sequence length="64" mass="7166">MSRICQITGKGPMVGNNVSHANNKTKRRFLPNLRTVRITLEDGTTRKVRVAASTLRTLKKQSSK</sequence>
<evidence type="ECO:0000255" key="1">
    <source>
        <dbReference type="HAMAP-Rule" id="MF_00373"/>
    </source>
</evidence>
<evidence type="ECO:0000305" key="2"/>
<gene>
    <name evidence="1" type="primary">rpmB</name>
    <name type="ordered locus">Cla_1029</name>
</gene>
<name>RL28_CAMLR</name>
<feature type="chain" id="PRO_1000195911" description="Large ribosomal subunit protein bL28">
    <location>
        <begin position="1"/>
        <end position="64"/>
    </location>
</feature>
<keyword id="KW-1185">Reference proteome</keyword>
<keyword id="KW-0687">Ribonucleoprotein</keyword>
<keyword id="KW-0689">Ribosomal protein</keyword>
<organism>
    <name type="scientific">Campylobacter lari (strain RM2100 / D67 / ATCC BAA-1060)</name>
    <dbReference type="NCBI Taxonomy" id="306263"/>
    <lineage>
        <taxon>Bacteria</taxon>
        <taxon>Pseudomonadati</taxon>
        <taxon>Campylobacterota</taxon>
        <taxon>Epsilonproteobacteria</taxon>
        <taxon>Campylobacterales</taxon>
        <taxon>Campylobacteraceae</taxon>
        <taxon>Campylobacter</taxon>
    </lineage>
</organism>
<accession>B9KCR2</accession>
<reference key="1">
    <citation type="journal article" date="2008" name="Foodborne Pathog. Dis.">
        <title>The complete genome sequence and analysis of the human pathogen Campylobacter lari.</title>
        <authorList>
            <person name="Miller W.G."/>
            <person name="Wang G."/>
            <person name="Binnewies T.T."/>
            <person name="Parker C.T."/>
        </authorList>
    </citation>
    <scope>NUCLEOTIDE SEQUENCE [LARGE SCALE GENOMIC DNA]</scope>
    <source>
        <strain>RM2100 / D67 / ATCC BAA-1060</strain>
    </source>
</reference>